<name>NFX1_MOUSE</name>
<organism>
    <name type="scientific">Mus musculus</name>
    <name type="common">Mouse</name>
    <dbReference type="NCBI Taxonomy" id="10090"/>
    <lineage>
        <taxon>Eukaryota</taxon>
        <taxon>Metazoa</taxon>
        <taxon>Chordata</taxon>
        <taxon>Craniata</taxon>
        <taxon>Vertebrata</taxon>
        <taxon>Euteleostomi</taxon>
        <taxon>Mammalia</taxon>
        <taxon>Eutheria</taxon>
        <taxon>Euarchontoglires</taxon>
        <taxon>Glires</taxon>
        <taxon>Rodentia</taxon>
        <taxon>Myomorpha</taxon>
        <taxon>Muroidea</taxon>
        <taxon>Muridae</taxon>
        <taxon>Murinae</taxon>
        <taxon>Mus</taxon>
        <taxon>Mus</taxon>
    </lineage>
</organism>
<comment type="function">
    <text evidence="6">Binds to the X-box motif of MHC class II genes and represses their expression. May play an important role in regulating the duration of an inflammatory response by limiting the period in which MHC class II molecules are induced by interferon-gamma. Together with PABPC1 or PABPC4, acts as a coactivator for TERT expression. Mediates E2-dependent ubiquitination.</text>
</comment>
<comment type="subunit">
    <text evidence="1">Interacts with PABPC1 and PABPC4.</text>
</comment>
<comment type="subcellular location">
    <subcellularLocation>
        <location evidence="1">Nucleus</location>
    </subcellularLocation>
</comment>
<comment type="alternative products">
    <event type="alternative splicing"/>
    <isoform>
        <id>B1AY10-1</id>
        <name>1</name>
        <sequence type="displayed"/>
    </isoform>
    <isoform>
        <id>B1AY10-2</id>
        <name>2</name>
        <sequence type="described" ref="VSP_033694 VSP_033695"/>
    </isoform>
    <isoform>
        <id>B1AY10-3</id>
        <name>3</name>
        <sequence type="described" ref="VSP_033693 VSP_033696"/>
    </isoform>
</comment>
<comment type="tissue specificity">
    <text evidence="6">Ubiquitously expressed, with highest levels in thymus.</text>
</comment>
<comment type="developmental stage">
    <text evidence="6">Ubiquitously expressed at 12 dpc and 14 dpc.</text>
</comment>
<comment type="domain">
    <text evidence="1">The RING-type zinc finger domain interacts with an ubiquitin-conjugating enzyme (E2) and facilitates ubiquitination.</text>
</comment>
<comment type="similarity">
    <text evidence="9">Belongs to the NFX1 family.</text>
</comment>
<comment type="sequence caution" evidence="9">
    <conflict type="frameshift">
        <sequence resource="EMBL-CDS" id="AAF34700"/>
    </conflict>
</comment>
<reference key="1">
    <citation type="journal article" date="2002" name="Immunology">
        <title>Murine NFX.1: isolation and characterization of its messenger RNA, mapping of its chromosomal location and assessment of its developmental expression.</title>
        <authorList>
            <person name="Arlotta P."/>
            <person name="Miyazaki D."/>
            <person name="Copeland N.G."/>
            <person name="Gilbert D.J."/>
            <person name="Jenkins N.A."/>
            <person name="Ono S.J."/>
        </authorList>
    </citation>
    <scope>NUCLEOTIDE SEQUENCE [MRNA] (ISOFORM 1)</scope>
    <scope>FUNCTION</scope>
    <scope>TISSUE SPECIFICITY</scope>
    <scope>DEVELOPMENTAL STAGE</scope>
</reference>
<reference key="2">
    <citation type="journal article" date="2005" name="Science">
        <title>The transcriptional landscape of the mammalian genome.</title>
        <authorList>
            <person name="Carninci P."/>
            <person name="Kasukawa T."/>
            <person name="Katayama S."/>
            <person name="Gough J."/>
            <person name="Frith M.C."/>
            <person name="Maeda N."/>
            <person name="Oyama R."/>
            <person name="Ravasi T."/>
            <person name="Lenhard B."/>
            <person name="Wells C."/>
            <person name="Kodzius R."/>
            <person name="Shimokawa K."/>
            <person name="Bajic V.B."/>
            <person name="Brenner S.E."/>
            <person name="Batalov S."/>
            <person name="Forrest A.R."/>
            <person name="Zavolan M."/>
            <person name="Davis M.J."/>
            <person name="Wilming L.G."/>
            <person name="Aidinis V."/>
            <person name="Allen J.E."/>
            <person name="Ambesi-Impiombato A."/>
            <person name="Apweiler R."/>
            <person name="Aturaliya R.N."/>
            <person name="Bailey T.L."/>
            <person name="Bansal M."/>
            <person name="Baxter L."/>
            <person name="Beisel K.W."/>
            <person name="Bersano T."/>
            <person name="Bono H."/>
            <person name="Chalk A.M."/>
            <person name="Chiu K.P."/>
            <person name="Choudhary V."/>
            <person name="Christoffels A."/>
            <person name="Clutterbuck D.R."/>
            <person name="Crowe M.L."/>
            <person name="Dalla E."/>
            <person name="Dalrymple B.P."/>
            <person name="de Bono B."/>
            <person name="Della Gatta G."/>
            <person name="di Bernardo D."/>
            <person name="Down T."/>
            <person name="Engstrom P."/>
            <person name="Fagiolini M."/>
            <person name="Faulkner G."/>
            <person name="Fletcher C.F."/>
            <person name="Fukushima T."/>
            <person name="Furuno M."/>
            <person name="Futaki S."/>
            <person name="Gariboldi M."/>
            <person name="Georgii-Hemming P."/>
            <person name="Gingeras T.R."/>
            <person name="Gojobori T."/>
            <person name="Green R.E."/>
            <person name="Gustincich S."/>
            <person name="Harbers M."/>
            <person name="Hayashi Y."/>
            <person name="Hensch T.K."/>
            <person name="Hirokawa N."/>
            <person name="Hill D."/>
            <person name="Huminiecki L."/>
            <person name="Iacono M."/>
            <person name="Ikeo K."/>
            <person name="Iwama A."/>
            <person name="Ishikawa T."/>
            <person name="Jakt M."/>
            <person name="Kanapin A."/>
            <person name="Katoh M."/>
            <person name="Kawasawa Y."/>
            <person name="Kelso J."/>
            <person name="Kitamura H."/>
            <person name="Kitano H."/>
            <person name="Kollias G."/>
            <person name="Krishnan S.P."/>
            <person name="Kruger A."/>
            <person name="Kummerfeld S.K."/>
            <person name="Kurochkin I.V."/>
            <person name="Lareau L.F."/>
            <person name="Lazarevic D."/>
            <person name="Lipovich L."/>
            <person name="Liu J."/>
            <person name="Liuni S."/>
            <person name="McWilliam S."/>
            <person name="Madan Babu M."/>
            <person name="Madera M."/>
            <person name="Marchionni L."/>
            <person name="Matsuda H."/>
            <person name="Matsuzawa S."/>
            <person name="Miki H."/>
            <person name="Mignone F."/>
            <person name="Miyake S."/>
            <person name="Morris K."/>
            <person name="Mottagui-Tabar S."/>
            <person name="Mulder N."/>
            <person name="Nakano N."/>
            <person name="Nakauchi H."/>
            <person name="Ng P."/>
            <person name="Nilsson R."/>
            <person name="Nishiguchi S."/>
            <person name="Nishikawa S."/>
            <person name="Nori F."/>
            <person name="Ohara O."/>
            <person name="Okazaki Y."/>
            <person name="Orlando V."/>
            <person name="Pang K.C."/>
            <person name="Pavan W.J."/>
            <person name="Pavesi G."/>
            <person name="Pesole G."/>
            <person name="Petrovsky N."/>
            <person name="Piazza S."/>
            <person name="Reed J."/>
            <person name="Reid J.F."/>
            <person name="Ring B.Z."/>
            <person name="Ringwald M."/>
            <person name="Rost B."/>
            <person name="Ruan Y."/>
            <person name="Salzberg S.L."/>
            <person name="Sandelin A."/>
            <person name="Schneider C."/>
            <person name="Schoenbach C."/>
            <person name="Sekiguchi K."/>
            <person name="Semple C.A."/>
            <person name="Seno S."/>
            <person name="Sessa L."/>
            <person name="Sheng Y."/>
            <person name="Shibata Y."/>
            <person name="Shimada H."/>
            <person name="Shimada K."/>
            <person name="Silva D."/>
            <person name="Sinclair B."/>
            <person name="Sperling S."/>
            <person name="Stupka E."/>
            <person name="Sugiura K."/>
            <person name="Sultana R."/>
            <person name="Takenaka Y."/>
            <person name="Taki K."/>
            <person name="Tammoja K."/>
            <person name="Tan S.L."/>
            <person name="Tang S."/>
            <person name="Taylor M.S."/>
            <person name="Tegner J."/>
            <person name="Teichmann S.A."/>
            <person name="Ueda H.R."/>
            <person name="van Nimwegen E."/>
            <person name="Verardo R."/>
            <person name="Wei C.L."/>
            <person name="Yagi K."/>
            <person name="Yamanishi H."/>
            <person name="Zabarovsky E."/>
            <person name="Zhu S."/>
            <person name="Zimmer A."/>
            <person name="Hide W."/>
            <person name="Bult C."/>
            <person name="Grimmond S.M."/>
            <person name="Teasdale R.D."/>
            <person name="Liu E.T."/>
            <person name="Brusic V."/>
            <person name="Quackenbush J."/>
            <person name="Wahlestedt C."/>
            <person name="Mattick J.S."/>
            <person name="Hume D.A."/>
            <person name="Kai C."/>
            <person name="Sasaki D."/>
            <person name="Tomaru Y."/>
            <person name="Fukuda S."/>
            <person name="Kanamori-Katayama M."/>
            <person name="Suzuki M."/>
            <person name="Aoki J."/>
            <person name="Arakawa T."/>
            <person name="Iida J."/>
            <person name="Imamura K."/>
            <person name="Itoh M."/>
            <person name="Kato T."/>
            <person name="Kawaji H."/>
            <person name="Kawagashira N."/>
            <person name="Kawashima T."/>
            <person name="Kojima M."/>
            <person name="Kondo S."/>
            <person name="Konno H."/>
            <person name="Nakano K."/>
            <person name="Ninomiya N."/>
            <person name="Nishio T."/>
            <person name="Okada M."/>
            <person name="Plessy C."/>
            <person name="Shibata K."/>
            <person name="Shiraki T."/>
            <person name="Suzuki S."/>
            <person name="Tagami M."/>
            <person name="Waki K."/>
            <person name="Watahiki A."/>
            <person name="Okamura-Oho Y."/>
            <person name="Suzuki H."/>
            <person name="Kawai J."/>
            <person name="Hayashizaki Y."/>
        </authorList>
    </citation>
    <scope>NUCLEOTIDE SEQUENCE [LARGE SCALE MRNA] (ISOFORMS 1; 2 AND 3)</scope>
    <source>
        <strain>C57BL/6J</strain>
        <strain>NOD</strain>
        <tissue>Diencephalon</tissue>
        <tissue>Liver</tissue>
        <tissue>Lung</tissue>
        <tissue>Placenta</tissue>
    </source>
</reference>
<reference key="3">
    <citation type="journal article" date="2009" name="PLoS Biol.">
        <title>Lineage-specific biology revealed by a finished genome assembly of the mouse.</title>
        <authorList>
            <person name="Church D.M."/>
            <person name="Goodstadt L."/>
            <person name="Hillier L.W."/>
            <person name="Zody M.C."/>
            <person name="Goldstein S."/>
            <person name="She X."/>
            <person name="Bult C.J."/>
            <person name="Agarwala R."/>
            <person name="Cherry J.L."/>
            <person name="DiCuccio M."/>
            <person name="Hlavina W."/>
            <person name="Kapustin Y."/>
            <person name="Meric P."/>
            <person name="Maglott D."/>
            <person name="Birtle Z."/>
            <person name="Marques A.C."/>
            <person name="Graves T."/>
            <person name="Zhou S."/>
            <person name="Teague B."/>
            <person name="Potamousis K."/>
            <person name="Churas C."/>
            <person name="Place M."/>
            <person name="Herschleb J."/>
            <person name="Runnheim R."/>
            <person name="Forrest D."/>
            <person name="Amos-Landgraf J."/>
            <person name="Schwartz D.C."/>
            <person name="Cheng Z."/>
            <person name="Lindblad-Toh K."/>
            <person name="Eichler E.E."/>
            <person name="Ponting C.P."/>
        </authorList>
    </citation>
    <scope>NUCLEOTIDE SEQUENCE [LARGE SCALE GENOMIC DNA]</scope>
    <source>
        <strain>C57BL/6J</strain>
    </source>
</reference>
<reference key="4">
    <citation type="journal article" date="2004" name="Genome Res.">
        <title>The status, quality, and expansion of the NIH full-length cDNA project: the Mammalian Gene Collection (MGC).</title>
        <authorList>
            <consortium name="The MGC Project Team"/>
        </authorList>
    </citation>
    <scope>NUCLEOTIDE SEQUENCE [LARGE SCALE MRNA] (ISOFORM 2)</scope>
    <source>
        <strain>C57BL/6J</strain>
        <tissue>Egg</tissue>
    </source>
</reference>
<reference key="5">
    <citation type="journal article" date="2010" name="Cell">
        <title>A tissue-specific atlas of mouse protein phosphorylation and expression.</title>
        <authorList>
            <person name="Huttlin E.L."/>
            <person name="Jedrychowski M.P."/>
            <person name="Elias J.E."/>
            <person name="Goswami T."/>
            <person name="Rad R."/>
            <person name="Beausoleil S.A."/>
            <person name="Villen J."/>
            <person name="Haas W."/>
            <person name="Sowa M.E."/>
            <person name="Gygi S.P."/>
        </authorList>
    </citation>
    <scope>PHOSPHORYLATION [LARGE SCALE ANALYSIS] AT SER-81; SER-126 AND SER-130</scope>
    <scope>IDENTIFICATION BY MASS SPECTROMETRY [LARGE SCALE ANALYSIS]</scope>
    <source>
        <tissue>Brain</tissue>
        <tissue>Kidney</tissue>
        <tissue>Pancreas</tissue>
        <tissue>Spleen</tissue>
    </source>
</reference>
<sequence length="1114" mass="123811">MAEAPPVSGTFKFNTDAAEFIPQERKTSGLNCGTQRRLDSSRIGRRNYSSSPPCHLPRHIPYEDISAVHQHSYASGSKPKSPQGFFQSSNKSLKNHGLQNQPWQKARNEKHQNRNKKAQGLSEQTSDTSSLESVARSESGTNPREHSPSESEKEVVIADPRGAKPKKAAQLTYNYGRGPKAKGRLRSEWGNRMSPKSEDENTRPVAISHTDSSDASCRKPVVDPCVCRRNEQRRYPQKRPPWEVEGARPRPGRNPPKQESQRHINAGPKTNMSPIPKDNLRERPTKSACDTGNLAVVSKSSRRVNQEKTAVRRQDPQVLSPFPRGKQNHMLKNVETHTGSLIEQLTTEKYECMVCCELVQVTAPVWSCQSCFHVFHLNCIKKWARSPASHADGQSGWRCPACQNVSAHVPNTYTCFCGKVKNPEWSRNEIPHSCGEVCRKKQPGQDCPHSCNLLCHPGPCPPCPAFTTKTCECGRTRHTVRCGQPVSVHCSNACENILNCGQHHCAELCHGGQCQPCRIILNQVCYCGSTSRDVLCGTDVGKSDGFGDFSCLKICGKDLKCGSHTCSQVCHPQPCQPCPRLPHLVRYCPCGQTPLSQLLEHGSNARKTCMDPVPSCGKVCGKPLACGSSDFIHTCEKLCHEGDCGPCSRTSVISCRCSFRTKELPCTSLKSEDATFMCDKRCNKKRLCGRHKCNEICCVDKEHKCPLICGRKLRCGLHRCEEPCHRGNCQTCWQASFDELTCHCGASVIYPPVPCGTRPPECTQTCARIHECDHPVYHSCHSEEKCPPCTFLTQKWCMGKHELRSNIPCHLVDISCGLPCSAMLPCGMHKCQRLCHKGECLVDEACKQPCTTPRGDCGHPCMAPCHPSLPCPVTACKAKVELQCECGRRKEMVICSEASGTYQRIVAISMASKITDMQLGDSVEISKLITKKEVQQARLQCDEECAALERRKRLAEAFDITDDSDPFNVRSSASKFSDSLKDDARKDLKFVSDVEKEMETLVEAVNKGKNNKKSHCFPPMNRDHRRIIHDLAQVYGLESISYDSEPKRNVVVTAVRGKSVCPPTTLTSVIERETQTRPPPPIPHHRHQADKAPGSSTLQKIVKEAVIDYFDVQD</sequence>
<keyword id="KW-0025">Alternative splicing</keyword>
<keyword id="KW-0238">DNA-binding</keyword>
<keyword id="KW-0479">Metal-binding</keyword>
<keyword id="KW-0539">Nucleus</keyword>
<keyword id="KW-0597">Phosphoprotein</keyword>
<keyword id="KW-1185">Reference proteome</keyword>
<keyword id="KW-0677">Repeat</keyword>
<keyword id="KW-0678">Repressor</keyword>
<keyword id="KW-0804">Transcription</keyword>
<keyword id="KW-0805">Transcription regulation</keyword>
<keyword id="KW-0808">Transferase</keyword>
<keyword id="KW-0833">Ubl conjugation pathway</keyword>
<keyword id="KW-0862">Zinc</keyword>
<keyword id="KW-0863">Zinc-finger</keyword>
<feature type="chain" id="PRO_0000334614" description="Transcriptional repressor NF-X1">
    <location>
        <begin position="1"/>
        <end position="1114"/>
    </location>
</feature>
<feature type="domain" description="R3H" evidence="4">
    <location>
        <begin position="988"/>
        <end position="1056"/>
    </location>
</feature>
<feature type="zinc finger region" description="RING-type; atypical" evidence="3">
    <location>
        <begin position="352"/>
        <end position="403"/>
    </location>
</feature>
<feature type="zinc finger region" description="NF-X1-type 1">
    <location>
        <begin position="447"/>
        <end position="465"/>
    </location>
</feature>
<feature type="zinc finger region" description="NF-X1-type 2">
    <location>
        <begin position="500"/>
        <end position="519"/>
    </location>
</feature>
<feature type="zinc finger region" description="NF-X1-type 3">
    <location>
        <begin position="561"/>
        <end position="580"/>
    </location>
</feature>
<feature type="zinc finger region" description="NF-X1-type 4">
    <location>
        <begin position="626"/>
        <end position="649"/>
    </location>
</feature>
<feature type="zinc finger region" description="NF-X1-type 5">
    <location>
        <begin position="688"/>
        <end position="707"/>
    </location>
</feature>
<feature type="zinc finger region" description="NF-X1-type 6">
    <location>
        <begin position="715"/>
        <end position="734"/>
    </location>
</feature>
<feature type="zinc finger region" description="NF-X1-type 7">
    <location>
        <begin position="826"/>
        <end position="848"/>
    </location>
</feature>
<feature type="zinc finger region" description="NF-X1-type 8">
    <location>
        <begin position="857"/>
        <end position="878"/>
    </location>
</feature>
<feature type="region of interest" description="Interaction with PABPC1 and PABC4" evidence="1">
    <location>
        <begin position="9"/>
        <end position="26"/>
    </location>
</feature>
<feature type="region of interest" description="Disordered" evidence="5">
    <location>
        <begin position="20"/>
        <end position="220"/>
    </location>
</feature>
<feature type="region of interest" description="Disordered" evidence="5">
    <location>
        <begin position="232"/>
        <end position="287"/>
    </location>
</feature>
<feature type="region of interest" description="Disordered" evidence="5">
    <location>
        <begin position="299"/>
        <end position="325"/>
    </location>
</feature>
<feature type="region of interest" description="Disordered" evidence="5">
    <location>
        <begin position="1071"/>
        <end position="1095"/>
    </location>
</feature>
<feature type="compositionally biased region" description="Polar residues" evidence="5">
    <location>
        <begin position="72"/>
        <end position="103"/>
    </location>
</feature>
<feature type="compositionally biased region" description="Polar residues" evidence="5">
    <location>
        <begin position="121"/>
        <end position="142"/>
    </location>
</feature>
<feature type="compositionally biased region" description="Basic and acidic residues" evidence="5">
    <location>
        <begin position="143"/>
        <end position="156"/>
    </location>
</feature>
<feature type="compositionally biased region" description="Basic and acidic residues" evidence="5">
    <location>
        <begin position="185"/>
        <end position="202"/>
    </location>
</feature>
<feature type="compositionally biased region" description="Basic and acidic residues" evidence="5">
    <location>
        <begin position="232"/>
        <end position="248"/>
    </location>
</feature>
<feature type="compositionally biased region" description="Basic and acidic residues" evidence="5">
    <location>
        <begin position="304"/>
        <end position="315"/>
    </location>
</feature>
<feature type="modified residue" description="Phosphoserine" evidence="2">
    <location>
        <position position="50"/>
    </location>
</feature>
<feature type="modified residue" description="Phosphoserine" evidence="10">
    <location>
        <position position="81"/>
    </location>
</feature>
<feature type="modified residue" description="Phosphoserine" evidence="2">
    <location>
        <position position="92"/>
    </location>
</feature>
<feature type="modified residue" description="Phosphoserine" evidence="10">
    <location>
        <position position="126"/>
    </location>
</feature>
<feature type="modified residue" description="Phosphoserine" evidence="10">
    <location>
        <position position="130"/>
    </location>
</feature>
<feature type="modified residue" description="Phosphoserine" evidence="2">
    <location>
        <position position="147"/>
    </location>
</feature>
<feature type="modified residue" description="Phosphoserine" evidence="2">
    <location>
        <position position="320"/>
    </location>
</feature>
<feature type="splice variant" id="VSP_033693" description="In isoform 3." evidence="8">
    <original>LRSNIPCHLVDISCGL</original>
    <variation>ELTIKKLWTFKETLDF</variation>
    <location>
        <begin position="803"/>
        <end position="818"/>
    </location>
</feature>
<feature type="splice variant" id="VSP_033694" description="In isoform 2." evidence="7 8">
    <original>LR</original>
    <variation>RQ</variation>
    <location>
        <begin position="803"/>
        <end position="804"/>
    </location>
</feature>
<feature type="splice variant" id="VSP_033695" description="In isoform 2." evidence="7 8">
    <location>
        <begin position="805"/>
        <end position="1114"/>
    </location>
</feature>
<feature type="splice variant" id="VSP_033696" description="In isoform 3." evidence="8">
    <location>
        <begin position="819"/>
        <end position="1114"/>
    </location>
</feature>
<feature type="sequence conflict" description="In Ref. 2; BAC28494." evidence="9" ref="2">
    <original>S</original>
    <variation>N</variation>
    <location>
        <position position="49"/>
    </location>
</feature>
<feature type="sequence conflict" description="In Ref. 2; BAE33235." evidence="9" ref="2">
    <original>T</original>
    <variation>A</variation>
    <location>
        <position position="141"/>
    </location>
</feature>
<feature type="sequence conflict" description="In Ref. 4; AAH53709." evidence="9" ref="4">
    <original>S</original>
    <variation>P</variation>
    <location>
        <position position="273"/>
    </location>
</feature>
<feature type="sequence conflict" description="In Ref. 2; BAE33235." evidence="9" ref="2">
    <original>C</original>
    <variation>Y</variation>
    <location>
        <position position="455"/>
    </location>
</feature>
<feature type="sequence conflict" description="In Ref. 4; AAH53709." evidence="9" ref="4">
    <original>C</original>
    <variation>R</variation>
    <location>
        <position position="590"/>
    </location>
</feature>
<dbReference type="EC" id="2.3.2.-"/>
<dbReference type="EMBL" id="AF223576">
    <property type="protein sequence ID" value="AAF34700.1"/>
    <property type="status" value="ALT_FRAME"/>
    <property type="molecule type" value="mRNA"/>
</dbReference>
<dbReference type="EMBL" id="AK005038">
    <property type="protein sequence ID" value="BAB23765.1"/>
    <property type="molecule type" value="mRNA"/>
</dbReference>
<dbReference type="EMBL" id="AK033850">
    <property type="protein sequence ID" value="BAC28494.1"/>
    <property type="molecule type" value="mRNA"/>
</dbReference>
<dbReference type="EMBL" id="AK144647">
    <property type="protein sequence ID" value="BAE25987.1"/>
    <property type="molecule type" value="mRNA"/>
</dbReference>
<dbReference type="EMBL" id="AK146108">
    <property type="protein sequence ID" value="BAE26907.1"/>
    <property type="molecule type" value="mRNA"/>
</dbReference>
<dbReference type="EMBL" id="AK155387">
    <property type="protein sequence ID" value="BAE33235.1"/>
    <property type="molecule type" value="mRNA"/>
</dbReference>
<dbReference type="EMBL" id="AL837521">
    <property type="status" value="NOT_ANNOTATED_CDS"/>
    <property type="molecule type" value="Genomic_DNA"/>
</dbReference>
<dbReference type="EMBL" id="BC053709">
    <property type="protein sequence ID" value="AAH53709.1"/>
    <property type="molecule type" value="mRNA"/>
</dbReference>
<dbReference type="CCDS" id="CCDS18054.1">
    <molecule id="B1AY10-1"/>
</dbReference>
<dbReference type="CCDS" id="CCDS71359.1">
    <molecule id="B1AY10-2"/>
</dbReference>
<dbReference type="CCDS" id="CCDS71360.1">
    <molecule id="B1AY10-3"/>
</dbReference>
<dbReference type="RefSeq" id="NP_001277377.1">
    <molecule id="B1AY10-3"/>
    <property type="nucleotide sequence ID" value="NM_001290448.1"/>
</dbReference>
<dbReference type="RefSeq" id="NP_001277378.1">
    <molecule id="B1AY10-2"/>
    <property type="nucleotide sequence ID" value="NM_001290449.1"/>
</dbReference>
<dbReference type="RefSeq" id="NP_076228.2">
    <molecule id="B1AY10-1"/>
    <property type="nucleotide sequence ID" value="NM_023739.3"/>
</dbReference>
<dbReference type="SMR" id="B1AY10"/>
<dbReference type="BioGRID" id="216539">
    <property type="interactions" value="18"/>
</dbReference>
<dbReference type="FunCoup" id="B1AY10">
    <property type="interactions" value="5548"/>
</dbReference>
<dbReference type="IntAct" id="B1AY10">
    <property type="interactions" value="2"/>
</dbReference>
<dbReference type="MINT" id="B1AY10"/>
<dbReference type="STRING" id="10090.ENSMUSP00000095747"/>
<dbReference type="iPTMnet" id="B1AY10"/>
<dbReference type="PhosphoSitePlus" id="B1AY10"/>
<dbReference type="SwissPalm" id="B1AY10"/>
<dbReference type="jPOST" id="B1AY10"/>
<dbReference type="PaxDb" id="10090-ENSMUSP00000095747"/>
<dbReference type="PeptideAtlas" id="B1AY10"/>
<dbReference type="ProteomicsDB" id="287501">
    <molecule id="B1AY10-1"/>
</dbReference>
<dbReference type="ProteomicsDB" id="287502">
    <molecule id="B1AY10-2"/>
</dbReference>
<dbReference type="ProteomicsDB" id="287503">
    <molecule id="B1AY10-3"/>
</dbReference>
<dbReference type="Pumba" id="B1AY10"/>
<dbReference type="Antibodypedia" id="25201">
    <property type="antibodies" value="146 antibodies from 28 providers"/>
</dbReference>
<dbReference type="DNASU" id="74164"/>
<dbReference type="Ensembl" id="ENSMUST00000030133.15">
    <molecule id="B1AY10-3"/>
    <property type="protein sequence ID" value="ENSMUSP00000030133.9"/>
    <property type="gene ID" value="ENSMUSG00000028423.16"/>
</dbReference>
<dbReference type="Ensembl" id="ENSMUST00000091614.7">
    <molecule id="B1AY10-2"/>
    <property type="protein sequence ID" value="ENSMUSP00000089203.7"/>
    <property type="gene ID" value="ENSMUSG00000028423.16"/>
</dbReference>
<dbReference type="Ensembl" id="ENSMUST00000098143.11">
    <molecule id="B1AY10-1"/>
    <property type="protein sequence ID" value="ENSMUSP00000095747.5"/>
    <property type="gene ID" value="ENSMUSG00000028423.16"/>
</dbReference>
<dbReference type="GeneID" id="74164"/>
<dbReference type="KEGG" id="mmu:74164"/>
<dbReference type="UCSC" id="uc008sic.2">
    <molecule id="B1AY10-2"/>
    <property type="organism name" value="mouse"/>
</dbReference>
<dbReference type="UCSC" id="uc008sid.2">
    <molecule id="B1AY10-3"/>
    <property type="organism name" value="mouse"/>
</dbReference>
<dbReference type="UCSC" id="uc008sie.2">
    <molecule id="B1AY10-1"/>
    <property type="organism name" value="mouse"/>
</dbReference>
<dbReference type="AGR" id="MGI:1921414"/>
<dbReference type="CTD" id="4799"/>
<dbReference type="MGI" id="MGI:1921414">
    <property type="gene designation" value="Nfx1"/>
</dbReference>
<dbReference type="VEuPathDB" id="HostDB:ENSMUSG00000028423"/>
<dbReference type="eggNOG" id="KOG1952">
    <property type="taxonomic scope" value="Eukaryota"/>
</dbReference>
<dbReference type="GeneTree" id="ENSGT00940000156325"/>
<dbReference type="HOGENOM" id="CLU_005714_1_2_1"/>
<dbReference type="InParanoid" id="B1AY10"/>
<dbReference type="OMA" id="CPHPCDS"/>
<dbReference type="OrthoDB" id="6512771at2759"/>
<dbReference type="PhylomeDB" id="B1AY10"/>
<dbReference type="TreeFam" id="TF105889"/>
<dbReference type="BioGRID-ORCS" id="74164">
    <property type="hits" value="2 hits in 81 CRISPR screens"/>
</dbReference>
<dbReference type="ChiTaRS" id="Nfx1">
    <property type="organism name" value="mouse"/>
</dbReference>
<dbReference type="PRO" id="PR:B1AY10"/>
<dbReference type="Proteomes" id="UP000000589">
    <property type="component" value="Chromosome 4"/>
</dbReference>
<dbReference type="RNAct" id="B1AY10">
    <property type="molecule type" value="protein"/>
</dbReference>
<dbReference type="Bgee" id="ENSMUSG00000028423">
    <property type="expression patterns" value="Expressed in cumulus cell and 258 other cell types or tissues"/>
</dbReference>
<dbReference type="GO" id="GO:0005829">
    <property type="term" value="C:cytosol"/>
    <property type="evidence" value="ECO:0007669"/>
    <property type="project" value="Ensembl"/>
</dbReference>
<dbReference type="GO" id="GO:0005730">
    <property type="term" value="C:nucleolus"/>
    <property type="evidence" value="ECO:0007669"/>
    <property type="project" value="Ensembl"/>
</dbReference>
<dbReference type="GO" id="GO:0005654">
    <property type="term" value="C:nucleoplasm"/>
    <property type="evidence" value="ECO:0007669"/>
    <property type="project" value="Ensembl"/>
</dbReference>
<dbReference type="GO" id="GO:0005886">
    <property type="term" value="C:plasma membrane"/>
    <property type="evidence" value="ECO:0007669"/>
    <property type="project" value="Ensembl"/>
</dbReference>
<dbReference type="GO" id="GO:0001227">
    <property type="term" value="F:DNA-binding transcription repressor activity, RNA polymerase II-specific"/>
    <property type="evidence" value="ECO:0007669"/>
    <property type="project" value="Ensembl"/>
</dbReference>
<dbReference type="GO" id="GO:0000977">
    <property type="term" value="F:RNA polymerase II transcription regulatory region sequence-specific DNA binding"/>
    <property type="evidence" value="ECO:0007669"/>
    <property type="project" value="Ensembl"/>
</dbReference>
<dbReference type="GO" id="GO:0061630">
    <property type="term" value="F:ubiquitin protein ligase activity"/>
    <property type="evidence" value="ECO:0007669"/>
    <property type="project" value="Ensembl"/>
</dbReference>
<dbReference type="GO" id="GO:0008270">
    <property type="term" value="F:zinc ion binding"/>
    <property type="evidence" value="ECO:0007669"/>
    <property type="project" value="UniProtKB-KW"/>
</dbReference>
<dbReference type="GO" id="GO:0045347">
    <property type="term" value="P:negative regulation of MHC class II biosynthetic process"/>
    <property type="evidence" value="ECO:0000314"/>
    <property type="project" value="MGI"/>
</dbReference>
<dbReference type="GO" id="GO:0000122">
    <property type="term" value="P:negative regulation of transcription by RNA polymerase II"/>
    <property type="evidence" value="ECO:0000314"/>
    <property type="project" value="MGI"/>
</dbReference>
<dbReference type="GO" id="GO:0051865">
    <property type="term" value="P:protein autoubiquitination"/>
    <property type="evidence" value="ECO:0007669"/>
    <property type="project" value="Ensembl"/>
</dbReference>
<dbReference type="CDD" id="cd06008">
    <property type="entry name" value="NF-X1-zinc-finger"/>
    <property type="match status" value="6"/>
</dbReference>
<dbReference type="CDD" id="cd02643">
    <property type="entry name" value="R3H_NF-X1"/>
    <property type="match status" value="1"/>
</dbReference>
<dbReference type="CDD" id="cd16696">
    <property type="entry name" value="RING-CH-C4HC3_NFX1"/>
    <property type="match status" value="1"/>
</dbReference>
<dbReference type="FunFam" id="3.30.1370.50:FF:000003">
    <property type="entry name" value="Transcriptional repressor NF-X1 isoform 1"/>
    <property type="match status" value="1"/>
</dbReference>
<dbReference type="Gene3D" id="3.30.1370.50">
    <property type="entry name" value="R3H-like domain"/>
    <property type="match status" value="1"/>
</dbReference>
<dbReference type="InterPro" id="IPR034078">
    <property type="entry name" value="NFX1_fam"/>
</dbReference>
<dbReference type="InterPro" id="IPR001374">
    <property type="entry name" value="R3H_dom"/>
</dbReference>
<dbReference type="InterPro" id="IPR036867">
    <property type="entry name" value="R3H_dom_sf"/>
</dbReference>
<dbReference type="InterPro" id="IPR034076">
    <property type="entry name" value="R3H_NF-X1"/>
</dbReference>
<dbReference type="InterPro" id="IPR000967">
    <property type="entry name" value="Znf_NFX1"/>
</dbReference>
<dbReference type="InterPro" id="IPR019787">
    <property type="entry name" value="Znf_PHD-finger"/>
</dbReference>
<dbReference type="InterPro" id="IPR001841">
    <property type="entry name" value="Znf_RING"/>
</dbReference>
<dbReference type="PANTHER" id="PTHR12360">
    <property type="entry name" value="NUCLEAR TRANSCRIPTION FACTOR, X-BOX BINDING 1 NFX1"/>
    <property type="match status" value="1"/>
</dbReference>
<dbReference type="PANTHER" id="PTHR12360:SF12">
    <property type="entry name" value="TRANSCRIPTIONAL REPRESSOR NF-X1"/>
    <property type="match status" value="1"/>
</dbReference>
<dbReference type="Pfam" id="PF01424">
    <property type="entry name" value="R3H"/>
    <property type="match status" value="1"/>
</dbReference>
<dbReference type="Pfam" id="PF01422">
    <property type="entry name" value="zf-NF-X1"/>
    <property type="match status" value="7"/>
</dbReference>
<dbReference type="SMART" id="SM00393">
    <property type="entry name" value="R3H"/>
    <property type="match status" value="1"/>
</dbReference>
<dbReference type="SMART" id="SM00438">
    <property type="entry name" value="ZnF_NFX"/>
    <property type="match status" value="9"/>
</dbReference>
<dbReference type="SUPFAM" id="SSF82708">
    <property type="entry name" value="R3H domain"/>
    <property type="match status" value="1"/>
</dbReference>
<dbReference type="SUPFAM" id="SSF57850">
    <property type="entry name" value="RING/U-box"/>
    <property type="match status" value="1"/>
</dbReference>
<dbReference type="PROSITE" id="PS51061">
    <property type="entry name" value="R3H"/>
    <property type="match status" value="1"/>
</dbReference>
<dbReference type="PROSITE" id="PS50089">
    <property type="entry name" value="ZF_RING_2"/>
    <property type="match status" value="1"/>
</dbReference>
<gene>
    <name type="primary">Nfx1</name>
</gene>
<protein>
    <recommendedName>
        <fullName>Transcriptional repressor NF-X1</fullName>
        <shortName>m-Nfx.1</shortName>
        <ecNumber>2.3.2.-</ecNumber>
    </recommendedName>
    <alternativeName>
        <fullName>Nuclear transcription factor, X box-binding protein 1</fullName>
    </alternativeName>
</protein>
<proteinExistence type="evidence at protein level"/>
<evidence type="ECO:0000250" key="1"/>
<evidence type="ECO:0000250" key="2">
    <source>
        <dbReference type="UniProtKB" id="Q12986"/>
    </source>
</evidence>
<evidence type="ECO:0000255" key="3">
    <source>
        <dbReference type="PROSITE-ProRule" id="PRU00175"/>
    </source>
</evidence>
<evidence type="ECO:0000255" key="4">
    <source>
        <dbReference type="PROSITE-ProRule" id="PRU00382"/>
    </source>
</evidence>
<evidence type="ECO:0000256" key="5">
    <source>
        <dbReference type="SAM" id="MobiDB-lite"/>
    </source>
</evidence>
<evidence type="ECO:0000269" key="6">
    <source>
    </source>
</evidence>
<evidence type="ECO:0000303" key="7">
    <source>
    </source>
</evidence>
<evidence type="ECO:0000303" key="8">
    <source>
    </source>
</evidence>
<evidence type="ECO:0000305" key="9"/>
<evidence type="ECO:0007744" key="10">
    <source>
    </source>
</evidence>
<accession>B1AY10</accession>
<accession>Q3U2A7</accession>
<accession>Q3UK95</accession>
<accession>Q3UMW1</accession>
<accession>Q7TPT4</accession>
<accession>Q8CC59</accession>
<accession>Q9DBC8</accession>
<accession>Q9JKW7</accession>